<sequence>MPTINVNKVDLERLSNISLSDKMIEDRFPMMGVEVEEIFEEVDKSGKKQKMVQFSINPDRPDYLSVEGLARGFRGFMGITTGIQEFEVLPSDIKVTVEENKTRPYVAFALVKNVLMDELVLESMINLQEKLHWAIGRDRKKLAIGIHDFDKVKAPFTYKEIKGDEIKFVPLGYEDEEMTPREIIEKHEKGIKYAHLIQDDRFPIIVDVNGEVLSLPPIINGTLTKVTPTSKNLLIDITGTEKEAVEETLNIIVCALAERRGTIVSVNVNGKKYPDLTLKSRIISIESINKKLGLELNPGEIIQAVKKSGMDALYEDGNLIVKIPAYRNDILHNVDLKEEIAINYGYEKFEGKLPSVATTGSKDPVEKKCNAMSDLMIGLGFYEVMNLTLSNQDTLFEKMNLKVEEKDYIEVLKPASIEHRVLRTSILPLLLETLYINKHHSLPQKIFEIGDCVIIDENDTETDTKCKNIKKIAGAITHPLTNFNEIKSSTEALLREFFEDFEFENYEHPAFIPGRCAKIIKDGKEVGFFGEIHPEVILNFELEHPIVGFEITIE</sequence>
<protein>
    <recommendedName>
        <fullName evidence="1">Phenylalanine--tRNA ligase beta subunit</fullName>
        <ecNumber evidence="1">6.1.1.20</ecNumber>
    </recommendedName>
    <alternativeName>
        <fullName evidence="1">Phenylalanyl-tRNA synthetase beta subunit</fullName>
        <shortName evidence="1">PheRS</shortName>
    </alternativeName>
</protein>
<name>SYFB_METM7</name>
<reference key="1">
    <citation type="submission" date="2007-06" db="EMBL/GenBank/DDBJ databases">
        <title>Complete sequence of Methanococcus maripaludis C7.</title>
        <authorList>
            <consortium name="US DOE Joint Genome Institute"/>
            <person name="Copeland A."/>
            <person name="Lucas S."/>
            <person name="Lapidus A."/>
            <person name="Barry K."/>
            <person name="Glavina del Rio T."/>
            <person name="Dalin E."/>
            <person name="Tice H."/>
            <person name="Pitluck S."/>
            <person name="Clum A."/>
            <person name="Schmutz J."/>
            <person name="Larimer F."/>
            <person name="Land M."/>
            <person name="Hauser L."/>
            <person name="Kyrpides N."/>
            <person name="Anderson I."/>
            <person name="Sieprawska-Lupa M."/>
            <person name="Whitman W.B."/>
            <person name="Richardson P."/>
        </authorList>
    </citation>
    <scope>NUCLEOTIDE SEQUENCE [LARGE SCALE GENOMIC DNA]</scope>
    <source>
        <strain>C7 / ATCC BAA-1331</strain>
    </source>
</reference>
<accession>A6VGJ4</accession>
<dbReference type="EC" id="6.1.1.20" evidence="1"/>
<dbReference type="EMBL" id="CP000745">
    <property type="protein sequence ID" value="ABR65570.1"/>
    <property type="molecule type" value="Genomic_DNA"/>
</dbReference>
<dbReference type="SMR" id="A6VGJ4"/>
<dbReference type="STRING" id="426368.MmarC7_0501"/>
<dbReference type="KEGG" id="mmz:MmarC7_0501"/>
<dbReference type="eggNOG" id="arCOG00412">
    <property type="taxonomic scope" value="Archaea"/>
</dbReference>
<dbReference type="HOGENOM" id="CLU_020279_3_0_2"/>
<dbReference type="OrthoDB" id="10073at2157"/>
<dbReference type="GO" id="GO:0009328">
    <property type="term" value="C:phenylalanine-tRNA ligase complex"/>
    <property type="evidence" value="ECO:0007669"/>
    <property type="project" value="TreeGrafter"/>
</dbReference>
<dbReference type="GO" id="GO:0005524">
    <property type="term" value="F:ATP binding"/>
    <property type="evidence" value="ECO:0007669"/>
    <property type="project" value="UniProtKB-UniRule"/>
</dbReference>
<dbReference type="GO" id="GO:0000287">
    <property type="term" value="F:magnesium ion binding"/>
    <property type="evidence" value="ECO:0007669"/>
    <property type="project" value="InterPro"/>
</dbReference>
<dbReference type="GO" id="GO:0004826">
    <property type="term" value="F:phenylalanine-tRNA ligase activity"/>
    <property type="evidence" value="ECO:0007669"/>
    <property type="project" value="UniProtKB-UniRule"/>
</dbReference>
<dbReference type="GO" id="GO:0003723">
    <property type="term" value="F:RNA binding"/>
    <property type="evidence" value="ECO:0007669"/>
    <property type="project" value="InterPro"/>
</dbReference>
<dbReference type="GO" id="GO:0006432">
    <property type="term" value="P:phenylalanyl-tRNA aminoacylation"/>
    <property type="evidence" value="ECO:0007669"/>
    <property type="project" value="UniProtKB-UniRule"/>
</dbReference>
<dbReference type="CDD" id="cd00769">
    <property type="entry name" value="PheRS_beta_core"/>
    <property type="match status" value="1"/>
</dbReference>
<dbReference type="FunFam" id="3.50.40.10:FF:000003">
    <property type="entry name" value="Phenylalanine--tRNA ligase beta subunit"/>
    <property type="match status" value="1"/>
</dbReference>
<dbReference type="Gene3D" id="3.30.56.10">
    <property type="match status" value="2"/>
</dbReference>
<dbReference type="Gene3D" id="3.30.930.10">
    <property type="entry name" value="Bira Bifunctional Protein, Domain 2"/>
    <property type="match status" value="1"/>
</dbReference>
<dbReference type="Gene3D" id="3.50.40.10">
    <property type="entry name" value="Phenylalanyl-trna Synthetase, Chain B, domain 3"/>
    <property type="match status" value="1"/>
</dbReference>
<dbReference type="HAMAP" id="MF_00284">
    <property type="entry name" value="Phe_tRNA_synth_beta2"/>
    <property type="match status" value="1"/>
</dbReference>
<dbReference type="InterPro" id="IPR045864">
    <property type="entry name" value="aa-tRNA-synth_II/BPL/LPL"/>
</dbReference>
<dbReference type="InterPro" id="IPR005146">
    <property type="entry name" value="B3/B4_tRNA-bd"/>
</dbReference>
<dbReference type="InterPro" id="IPR009061">
    <property type="entry name" value="DNA-bd_dom_put_sf"/>
</dbReference>
<dbReference type="InterPro" id="IPR045060">
    <property type="entry name" value="Phe-tRNA-ligase_IIc_bsu"/>
</dbReference>
<dbReference type="InterPro" id="IPR004531">
    <property type="entry name" value="Phe-tRNA-synth_IIc_bsu_arc_euk"/>
</dbReference>
<dbReference type="InterPro" id="IPR020825">
    <property type="entry name" value="Phe-tRNA_synthase-like_B3/B4"/>
</dbReference>
<dbReference type="InterPro" id="IPR022918">
    <property type="entry name" value="Phe_tRNA_ligase_beta2_arc"/>
</dbReference>
<dbReference type="InterPro" id="IPR041616">
    <property type="entry name" value="PheRS_beta_core"/>
</dbReference>
<dbReference type="InterPro" id="IPR040659">
    <property type="entry name" value="PhetRS_B1"/>
</dbReference>
<dbReference type="InterPro" id="IPR005147">
    <property type="entry name" value="tRNA_synthase_B5-dom"/>
</dbReference>
<dbReference type="NCBIfam" id="TIGR00471">
    <property type="entry name" value="pheT_arch"/>
    <property type="match status" value="1"/>
</dbReference>
<dbReference type="PANTHER" id="PTHR10947:SF0">
    <property type="entry name" value="PHENYLALANINE--TRNA LIGASE BETA SUBUNIT"/>
    <property type="match status" value="1"/>
</dbReference>
<dbReference type="PANTHER" id="PTHR10947">
    <property type="entry name" value="PHENYLALANYL-TRNA SYNTHETASE BETA CHAIN AND LEUCINE-RICH REPEAT-CONTAINING PROTEIN 47"/>
    <property type="match status" value="1"/>
</dbReference>
<dbReference type="Pfam" id="PF03483">
    <property type="entry name" value="B3_4"/>
    <property type="match status" value="1"/>
</dbReference>
<dbReference type="Pfam" id="PF03484">
    <property type="entry name" value="B5"/>
    <property type="match status" value="1"/>
</dbReference>
<dbReference type="Pfam" id="PF18262">
    <property type="entry name" value="PhetRS_B1"/>
    <property type="match status" value="1"/>
</dbReference>
<dbReference type="Pfam" id="PF17759">
    <property type="entry name" value="tRNA_synthFbeta"/>
    <property type="match status" value="1"/>
</dbReference>
<dbReference type="SMART" id="SM00873">
    <property type="entry name" value="B3_4"/>
    <property type="match status" value="1"/>
</dbReference>
<dbReference type="SMART" id="SM00874">
    <property type="entry name" value="B5"/>
    <property type="match status" value="1"/>
</dbReference>
<dbReference type="SUPFAM" id="SSF55681">
    <property type="entry name" value="Class II aaRS and biotin synthetases"/>
    <property type="match status" value="1"/>
</dbReference>
<dbReference type="SUPFAM" id="SSF46955">
    <property type="entry name" value="Putative DNA-binding domain"/>
    <property type="match status" value="2"/>
</dbReference>
<dbReference type="PROSITE" id="PS51483">
    <property type="entry name" value="B5"/>
    <property type="match status" value="1"/>
</dbReference>
<proteinExistence type="inferred from homology"/>
<evidence type="ECO:0000255" key="1">
    <source>
        <dbReference type="HAMAP-Rule" id="MF_00284"/>
    </source>
</evidence>
<feature type="chain" id="PRO_1000022423" description="Phenylalanine--tRNA ligase beta subunit">
    <location>
        <begin position="1"/>
        <end position="554"/>
    </location>
</feature>
<feature type="domain" description="B5" evidence="1">
    <location>
        <begin position="276"/>
        <end position="351"/>
    </location>
</feature>
<feature type="binding site" evidence="1">
    <location>
        <position position="329"/>
    </location>
    <ligand>
        <name>Mg(2+)</name>
        <dbReference type="ChEBI" id="CHEBI:18420"/>
        <note>shared with alpha subunit</note>
    </ligand>
</feature>
<feature type="binding site" evidence="1">
    <location>
        <position position="335"/>
    </location>
    <ligand>
        <name>Mg(2+)</name>
        <dbReference type="ChEBI" id="CHEBI:18420"/>
        <note>shared with alpha subunit</note>
    </ligand>
</feature>
<feature type="binding site" evidence="1">
    <location>
        <position position="338"/>
    </location>
    <ligand>
        <name>Mg(2+)</name>
        <dbReference type="ChEBI" id="CHEBI:18420"/>
        <note>shared with alpha subunit</note>
    </ligand>
</feature>
<feature type="binding site" evidence="1">
    <location>
        <position position="339"/>
    </location>
    <ligand>
        <name>Mg(2+)</name>
        <dbReference type="ChEBI" id="CHEBI:18420"/>
        <note>shared with alpha subunit</note>
    </ligand>
</feature>
<comment type="catalytic activity">
    <reaction evidence="1">
        <text>tRNA(Phe) + L-phenylalanine + ATP = L-phenylalanyl-tRNA(Phe) + AMP + diphosphate + H(+)</text>
        <dbReference type="Rhea" id="RHEA:19413"/>
        <dbReference type="Rhea" id="RHEA-COMP:9668"/>
        <dbReference type="Rhea" id="RHEA-COMP:9699"/>
        <dbReference type="ChEBI" id="CHEBI:15378"/>
        <dbReference type="ChEBI" id="CHEBI:30616"/>
        <dbReference type="ChEBI" id="CHEBI:33019"/>
        <dbReference type="ChEBI" id="CHEBI:58095"/>
        <dbReference type="ChEBI" id="CHEBI:78442"/>
        <dbReference type="ChEBI" id="CHEBI:78531"/>
        <dbReference type="ChEBI" id="CHEBI:456215"/>
        <dbReference type="EC" id="6.1.1.20"/>
    </reaction>
</comment>
<comment type="cofactor">
    <cofactor evidence="1">
        <name>Mg(2+)</name>
        <dbReference type="ChEBI" id="CHEBI:18420"/>
    </cofactor>
</comment>
<comment type="subunit">
    <text evidence="1">Tetramer of two alpha and two beta subunits.</text>
</comment>
<comment type="subcellular location">
    <subcellularLocation>
        <location evidence="1">Cytoplasm</location>
    </subcellularLocation>
</comment>
<comment type="similarity">
    <text evidence="1">Belongs to the phenylalanyl-tRNA synthetase beta subunit family. Type 2 subfamily.</text>
</comment>
<gene>
    <name evidence="1" type="primary">pheT</name>
    <name type="ordered locus">MmarC7_0501</name>
</gene>
<organism>
    <name type="scientific">Methanococcus maripaludis (strain C7 / ATCC BAA-1331)</name>
    <dbReference type="NCBI Taxonomy" id="426368"/>
    <lineage>
        <taxon>Archaea</taxon>
        <taxon>Methanobacteriati</taxon>
        <taxon>Methanobacteriota</taxon>
        <taxon>Methanomada group</taxon>
        <taxon>Methanococci</taxon>
        <taxon>Methanococcales</taxon>
        <taxon>Methanococcaceae</taxon>
        <taxon>Methanococcus</taxon>
    </lineage>
</organism>
<keyword id="KW-0030">Aminoacyl-tRNA synthetase</keyword>
<keyword id="KW-0067">ATP-binding</keyword>
<keyword id="KW-0963">Cytoplasm</keyword>
<keyword id="KW-0436">Ligase</keyword>
<keyword id="KW-0460">Magnesium</keyword>
<keyword id="KW-0479">Metal-binding</keyword>
<keyword id="KW-0547">Nucleotide-binding</keyword>
<keyword id="KW-0648">Protein biosynthesis</keyword>